<gene>
    <name type="primary">BHLH114</name>
    <name type="synonym">EN65</name>
    <name type="ordered locus">At4g05170</name>
    <name type="ORF">C17L7.90</name>
</gene>
<name>BH114_ARATH</name>
<organism>
    <name type="scientific">Arabidopsis thaliana</name>
    <name type="common">Mouse-ear cress</name>
    <dbReference type="NCBI Taxonomy" id="3702"/>
    <lineage>
        <taxon>Eukaryota</taxon>
        <taxon>Viridiplantae</taxon>
        <taxon>Streptophyta</taxon>
        <taxon>Embryophyta</taxon>
        <taxon>Tracheophyta</taxon>
        <taxon>Spermatophyta</taxon>
        <taxon>Magnoliopsida</taxon>
        <taxon>eudicotyledons</taxon>
        <taxon>Gunneridae</taxon>
        <taxon>Pentapetalae</taxon>
        <taxon>rosids</taxon>
        <taxon>malvids</taxon>
        <taxon>Brassicales</taxon>
        <taxon>Brassicaceae</taxon>
        <taxon>Camelineae</taxon>
        <taxon>Arabidopsis</taxon>
    </lineage>
</organism>
<dbReference type="EMBL" id="AL161503">
    <property type="protein sequence ID" value="CAB81059.1"/>
    <property type="status" value="ALT_SEQ"/>
    <property type="molecule type" value="Genomic_DNA"/>
</dbReference>
<dbReference type="EMBL" id="CP002687">
    <property type="protein sequence ID" value="ANM66812.1"/>
    <property type="molecule type" value="Genomic_DNA"/>
</dbReference>
<dbReference type="EMBL" id="BT015446">
    <property type="status" value="NOT_ANNOTATED_CDS"/>
    <property type="molecule type" value="mRNA"/>
</dbReference>
<dbReference type="PIR" id="A85065">
    <property type="entry name" value="A85065"/>
</dbReference>
<dbReference type="RefSeq" id="NP_192426.3">
    <property type="nucleotide sequence ID" value="NM_116756.3"/>
</dbReference>
<dbReference type="SMR" id="Q9M0X8"/>
<dbReference type="BioGRID" id="11176">
    <property type="interactions" value="6"/>
</dbReference>
<dbReference type="FunCoup" id="Q9M0X8">
    <property type="interactions" value="15"/>
</dbReference>
<dbReference type="IntAct" id="Q9M0X8">
    <property type="interactions" value="6"/>
</dbReference>
<dbReference type="STRING" id="3702.Q9M0X8"/>
<dbReference type="PaxDb" id="3702-AT4G05170.1"/>
<dbReference type="DNASU" id="825865"/>
<dbReference type="EnsemblPlants" id="AT4G05170.2">
    <property type="protein sequence ID" value="AT4G05170.2"/>
    <property type="gene ID" value="AT4G05170"/>
</dbReference>
<dbReference type="GeneID" id="825865"/>
<dbReference type="Gramene" id="AT4G05170.2">
    <property type="protein sequence ID" value="AT4G05170.2"/>
    <property type="gene ID" value="AT4G05170"/>
</dbReference>
<dbReference type="KEGG" id="ath:AT4G05170"/>
<dbReference type="Araport" id="AT4G05170"/>
<dbReference type="TAIR" id="AT4G05170"/>
<dbReference type="eggNOG" id="ENOG502QRNH">
    <property type="taxonomic scope" value="Eukaryota"/>
</dbReference>
<dbReference type="HOGENOM" id="CLU_083455_0_0_1"/>
<dbReference type="InParanoid" id="Q9M0X8"/>
<dbReference type="PhylomeDB" id="Q9M0X8"/>
<dbReference type="PRO" id="PR:Q9M0X8"/>
<dbReference type="Proteomes" id="UP000006548">
    <property type="component" value="Chromosome 4"/>
</dbReference>
<dbReference type="ExpressionAtlas" id="Q9M0X8">
    <property type="expression patterns" value="baseline and differential"/>
</dbReference>
<dbReference type="GO" id="GO:0005634">
    <property type="term" value="C:nucleus"/>
    <property type="evidence" value="ECO:0000314"/>
    <property type="project" value="TAIR"/>
</dbReference>
<dbReference type="GO" id="GO:0003677">
    <property type="term" value="F:DNA binding"/>
    <property type="evidence" value="ECO:0007669"/>
    <property type="project" value="UniProtKB-KW"/>
</dbReference>
<dbReference type="GO" id="GO:0003700">
    <property type="term" value="F:DNA-binding transcription factor activity"/>
    <property type="evidence" value="ECO:0000250"/>
    <property type="project" value="TAIR"/>
</dbReference>
<dbReference type="GO" id="GO:0046983">
    <property type="term" value="F:protein dimerization activity"/>
    <property type="evidence" value="ECO:0007669"/>
    <property type="project" value="InterPro"/>
</dbReference>
<dbReference type="CDD" id="cd11393">
    <property type="entry name" value="bHLH_AtbHLH_like"/>
    <property type="match status" value="1"/>
</dbReference>
<dbReference type="FunFam" id="4.10.280.10:FF:000075">
    <property type="entry name" value="Transcription factor bHLH113 family"/>
    <property type="match status" value="1"/>
</dbReference>
<dbReference type="Gene3D" id="4.10.280.10">
    <property type="entry name" value="Helix-loop-helix DNA-binding domain"/>
    <property type="match status" value="1"/>
</dbReference>
<dbReference type="InterPro" id="IPR045239">
    <property type="entry name" value="bHLH95_bHLH"/>
</dbReference>
<dbReference type="InterPro" id="IPR011598">
    <property type="entry name" value="bHLH_dom"/>
</dbReference>
<dbReference type="InterPro" id="IPR036638">
    <property type="entry name" value="HLH_DNA-bd_sf"/>
</dbReference>
<dbReference type="InterPro" id="IPR045843">
    <property type="entry name" value="IND-like"/>
</dbReference>
<dbReference type="PANTHER" id="PTHR16223:SF238">
    <property type="entry name" value="TRANSCRIPTION FACTOR BHLH114"/>
    <property type="match status" value="1"/>
</dbReference>
<dbReference type="PANTHER" id="PTHR16223">
    <property type="entry name" value="TRANSCRIPTION FACTOR BHLH83-RELATED"/>
    <property type="match status" value="1"/>
</dbReference>
<dbReference type="Pfam" id="PF00010">
    <property type="entry name" value="HLH"/>
    <property type="match status" value="1"/>
</dbReference>
<dbReference type="SMART" id="SM00353">
    <property type="entry name" value="HLH"/>
    <property type="match status" value="1"/>
</dbReference>
<dbReference type="SUPFAM" id="SSF47459">
    <property type="entry name" value="HLH, helix-loop-helix DNA-binding domain"/>
    <property type="match status" value="1"/>
</dbReference>
<dbReference type="PROSITE" id="PS50888">
    <property type="entry name" value="BHLH"/>
    <property type="match status" value="1"/>
</dbReference>
<feature type="chain" id="PRO_0000358800" description="Transcription factor bHLH114">
    <location>
        <begin position="1"/>
        <end position="298"/>
    </location>
</feature>
<feature type="domain" description="bHLH" evidence="2">
    <location>
        <begin position="163"/>
        <end position="212"/>
    </location>
</feature>
<feature type="region of interest" description="Disordered" evidence="3">
    <location>
        <begin position="126"/>
        <end position="154"/>
    </location>
</feature>
<feature type="coiled-coil region" evidence="1">
    <location>
        <begin position="117"/>
        <end position="149"/>
    </location>
</feature>
<feature type="compositionally biased region" description="Polar residues" evidence="3">
    <location>
        <begin position="129"/>
        <end position="140"/>
    </location>
</feature>
<evidence type="ECO:0000255" key="1"/>
<evidence type="ECO:0000255" key="2">
    <source>
        <dbReference type="PROSITE-ProRule" id="PRU00981"/>
    </source>
</evidence>
<evidence type="ECO:0000256" key="3">
    <source>
        <dbReference type="SAM" id="MobiDB-lite"/>
    </source>
</evidence>
<evidence type="ECO:0000269" key="4">
    <source>
    </source>
</evidence>
<evidence type="ECO:0000305" key="5"/>
<sequence length="298" mass="33345">MTEEFEIAGISTGAWWSSPTNTAAVFSGYSLPCSTEISPDVTNFGWQNFDNKINDHNDGCMNMHNSFFEGLLIDPNDQLLPDPWSKSTIPNAKSELLENFPFLDNMFLVDSEAESLLDHEIRNHKSSKEQITQDYKNLTSKRSEELEENSDEYSPRLLKRPRLETLSPLPSFKVRKEKLGDRITALQQLVSPFGKTDTASVLNEAVEYIKFLQEQVTVLSNPEQNTIGSVQQQQCSNKKSINTQGEVEEDECSPRRYVDLSSRGLCLMPISASYPVAAAAASAAEMNVHLVSGIFHSL</sequence>
<protein>
    <recommendedName>
        <fullName>Transcription factor bHLH114</fullName>
    </recommendedName>
    <alternativeName>
        <fullName>Basic helix-loop-helix protein 114</fullName>
        <shortName>AtbHLH114</shortName>
        <shortName>bHLH 114</shortName>
    </alternativeName>
    <alternativeName>
        <fullName>Transcription factor EN 65</fullName>
    </alternativeName>
    <alternativeName>
        <fullName>bHLH transcription factor bHLH114</fullName>
    </alternativeName>
</protein>
<comment type="subunit">
    <text evidence="5">Homodimer.</text>
</comment>
<comment type="subcellular location">
    <subcellularLocation>
        <location evidence="2 4">Nucleus</location>
    </subcellularLocation>
</comment>
<comment type="tissue specificity">
    <text evidence="4">Differentiating root endodermis.</text>
</comment>
<comment type="sequence caution" evidence="5">
    <conflict type="erroneous gene model prediction">
        <sequence resource="EMBL-CDS" id="CAB81059"/>
    </conflict>
</comment>
<keyword id="KW-0175">Coiled coil</keyword>
<keyword id="KW-0238">DNA-binding</keyword>
<keyword id="KW-0539">Nucleus</keyword>
<keyword id="KW-1185">Reference proteome</keyword>
<keyword id="KW-0804">Transcription</keyword>
<keyword id="KW-0805">Transcription regulation</keyword>
<accession>Q9M0X8</accession>
<accession>F4JGP2</accession>
<proteinExistence type="evidence at transcript level"/>
<reference key="1">
    <citation type="journal article" date="1999" name="Nature">
        <title>Sequence and analysis of chromosome 4 of the plant Arabidopsis thaliana.</title>
        <authorList>
            <person name="Mayer K.F.X."/>
            <person name="Schueller C."/>
            <person name="Wambutt R."/>
            <person name="Murphy G."/>
            <person name="Volckaert G."/>
            <person name="Pohl T."/>
            <person name="Duesterhoeft A."/>
            <person name="Stiekema W."/>
            <person name="Entian K.-D."/>
            <person name="Terryn N."/>
            <person name="Harris B."/>
            <person name="Ansorge W."/>
            <person name="Brandt P."/>
            <person name="Grivell L.A."/>
            <person name="Rieger M."/>
            <person name="Weichselgartner M."/>
            <person name="de Simone V."/>
            <person name="Obermaier B."/>
            <person name="Mache R."/>
            <person name="Mueller M."/>
            <person name="Kreis M."/>
            <person name="Delseny M."/>
            <person name="Puigdomenech P."/>
            <person name="Watson M."/>
            <person name="Schmidtheini T."/>
            <person name="Reichert B."/>
            <person name="Portetelle D."/>
            <person name="Perez-Alonso M."/>
            <person name="Boutry M."/>
            <person name="Bancroft I."/>
            <person name="Vos P."/>
            <person name="Hoheisel J."/>
            <person name="Zimmermann W."/>
            <person name="Wedler H."/>
            <person name="Ridley P."/>
            <person name="Langham S.-A."/>
            <person name="McCullagh B."/>
            <person name="Bilham L."/>
            <person name="Robben J."/>
            <person name="van der Schueren J."/>
            <person name="Grymonprez B."/>
            <person name="Chuang Y.-J."/>
            <person name="Vandenbussche F."/>
            <person name="Braeken M."/>
            <person name="Weltjens I."/>
            <person name="Voet M."/>
            <person name="Bastiaens I."/>
            <person name="Aert R."/>
            <person name="Defoor E."/>
            <person name="Weitzenegger T."/>
            <person name="Bothe G."/>
            <person name="Ramsperger U."/>
            <person name="Hilbert H."/>
            <person name="Braun M."/>
            <person name="Holzer E."/>
            <person name="Brandt A."/>
            <person name="Peters S."/>
            <person name="van Staveren M."/>
            <person name="Dirkse W."/>
            <person name="Mooijman P."/>
            <person name="Klein Lankhorst R."/>
            <person name="Rose M."/>
            <person name="Hauf J."/>
            <person name="Koetter P."/>
            <person name="Berneiser S."/>
            <person name="Hempel S."/>
            <person name="Feldpausch M."/>
            <person name="Lamberth S."/>
            <person name="Van den Daele H."/>
            <person name="De Keyser A."/>
            <person name="Buysshaert C."/>
            <person name="Gielen J."/>
            <person name="Villarroel R."/>
            <person name="De Clercq R."/>
            <person name="van Montagu M."/>
            <person name="Rogers J."/>
            <person name="Cronin A."/>
            <person name="Quail M.A."/>
            <person name="Bray-Allen S."/>
            <person name="Clark L."/>
            <person name="Doggett J."/>
            <person name="Hall S."/>
            <person name="Kay M."/>
            <person name="Lennard N."/>
            <person name="McLay K."/>
            <person name="Mayes R."/>
            <person name="Pettett A."/>
            <person name="Rajandream M.A."/>
            <person name="Lyne M."/>
            <person name="Benes V."/>
            <person name="Rechmann S."/>
            <person name="Borkova D."/>
            <person name="Bloecker H."/>
            <person name="Scharfe M."/>
            <person name="Grimm M."/>
            <person name="Loehnert T.-H."/>
            <person name="Dose S."/>
            <person name="de Haan M."/>
            <person name="Maarse A.C."/>
            <person name="Schaefer M."/>
            <person name="Mueller-Auer S."/>
            <person name="Gabel C."/>
            <person name="Fuchs M."/>
            <person name="Fartmann B."/>
            <person name="Granderath K."/>
            <person name="Dauner D."/>
            <person name="Herzl A."/>
            <person name="Neumann S."/>
            <person name="Argiriou A."/>
            <person name="Vitale D."/>
            <person name="Liguori R."/>
            <person name="Piravandi E."/>
            <person name="Massenet O."/>
            <person name="Quigley F."/>
            <person name="Clabauld G."/>
            <person name="Muendlein A."/>
            <person name="Felber R."/>
            <person name="Schnabl S."/>
            <person name="Hiller R."/>
            <person name="Schmidt W."/>
            <person name="Lecharny A."/>
            <person name="Aubourg S."/>
            <person name="Chefdor F."/>
            <person name="Cooke R."/>
            <person name="Berger C."/>
            <person name="Monfort A."/>
            <person name="Casacuberta E."/>
            <person name="Gibbons T."/>
            <person name="Weber N."/>
            <person name="Vandenbol M."/>
            <person name="Bargues M."/>
            <person name="Terol J."/>
            <person name="Torres A."/>
            <person name="Perez-Perez A."/>
            <person name="Purnelle B."/>
            <person name="Bent E."/>
            <person name="Johnson S."/>
            <person name="Tacon D."/>
            <person name="Jesse T."/>
            <person name="Heijnen L."/>
            <person name="Schwarz S."/>
            <person name="Scholler P."/>
            <person name="Heber S."/>
            <person name="Francs P."/>
            <person name="Bielke C."/>
            <person name="Frishman D."/>
            <person name="Haase D."/>
            <person name="Lemcke K."/>
            <person name="Mewes H.-W."/>
            <person name="Stocker S."/>
            <person name="Zaccaria P."/>
            <person name="Bevan M."/>
            <person name="Wilson R.K."/>
            <person name="de la Bastide M."/>
            <person name="Habermann K."/>
            <person name="Parnell L."/>
            <person name="Dedhia N."/>
            <person name="Gnoj L."/>
            <person name="Schutz K."/>
            <person name="Huang E."/>
            <person name="Spiegel L."/>
            <person name="Sekhon M."/>
            <person name="Murray J."/>
            <person name="Sheet P."/>
            <person name="Cordes M."/>
            <person name="Abu-Threideh J."/>
            <person name="Stoneking T."/>
            <person name="Kalicki J."/>
            <person name="Graves T."/>
            <person name="Harmon G."/>
            <person name="Edwards J."/>
            <person name="Latreille P."/>
            <person name="Courtney L."/>
            <person name="Cloud J."/>
            <person name="Abbott A."/>
            <person name="Scott K."/>
            <person name="Johnson D."/>
            <person name="Minx P."/>
            <person name="Bentley D."/>
            <person name="Fulton B."/>
            <person name="Miller N."/>
            <person name="Greco T."/>
            <person name="Kemp K."/>
            <person name="Kramer J."/>
            <person name="Fulton L."/>
            <person name="Mardis E."/>
            <person name="Dante M."/>
            <person name="Pepin K."/>
            <person name="Hillier L.W."/>
            <person name="Nelson J."/>
            <person name="Spieth J."/>
            <person name="Ryan E."/>
            <person name="Andrews S."/>
            <person name="Geisel C."/>
            <person name="Layman D."/>
            <person name="Du H."/>
            <person name="Ali J."/>
            <person name="Berghoff A."/>
            <person name="Jones K."/>
            <person name="Drone K."/>
            <person name="Cotton M."/>
            <person name="Joshu C."/>
            <person name="Antonoiu B."/>
            <person name="Zidanic M."/>
            <person name="Strong C."/>
            <person name="Sun H."/>
            <person name="Lamar B."/>
            <person name="Yordan C."/>
            <person name="Ma P."/>
            <person name="Zhong J."/>
            <person name="Preston R."/>
            <person name="Vil D."/>
            <person name="Shekher M."/>
            <person name="Matero A."/>
            <person name="Shah R."/>
            <person name="Swaby I.K."/>
            <person name="O'Shaughnessy A."/>
            <person name="Rodriguez M."/>
            <person name="Hoffman J."/>
            <person name="Till S."/>
            <person name="Granat S."/>
            <person name="Shohdy N."/>
            <person name="Hasegawa A."/>
            <person name="Hameed A."/>
            <person name="Lodhi M."/>
            <person name="Johnson A."/>
            <person name="Chen E."/>
            <person name="Marra M.A."/>
            <person name="Martienssen R."/>
            <person name="McCombie W.R."/>
        </authorList>
    </citation>
    <scope>NUCLEOTIDE SEQUENCE [LARGE SCALE GENOMIC DNA]</scope>
    <source>
        <strain>cv. Columbia</strain>
    </source>
</reference>
<reference key="2">
    <citation type="journal article" date="2017" name="Plant J.">
        <title>Araport11: a complete reannotation of the Arabidopsis thaliana reference genome.</title>
        <authorList>
            <person name="Cheng C.Y."/>
            <person name="Krishnakumar V."/>
            <person name="Chan A.P."/>
            <person name="Thibaud-Nissen F."/>
            <person name="Schobel S."/>
            <person name="Town C.D."/>
        </authorList>
    </citation>
    <scope>GENOME REANNOTATION</scope>
    <source>
        <strain>cv. Columbia</strain>
    </source>
</reference>
<reference key="3">
    <citation type="journal article" date="2004" name="J. Struct. Funct. Genomics">
        <title>Results from high-throughput DNA cloning of Arabidopsis thaliana target genes using site-specific recombination.</title>
        <authorList>
            <consortium name="Center for eukaryotic structural genomics (CESG)"/>
        </authorList>
    </citation>
    <scope>NUCLEOTIDE SEQUENCE [LARGE SCALE MRNA] OF 2-298</scope>
    <source>
        <strain>cv. Columbia</strain>
    </source>
</reference>
<reference key="4">
    <citation type="journal article" date="2003" name="Mol. Biol. Evol.">
        <title>The basic helix-loop-helix transcription factor family in plants: a genome-wide study of protein structure and functional diversity.</title>
        <authorList>
            <person name="Heim M.A."/>
            <person name="Jakoby M."/>
            <person name="Werber M."/>
            <person name="Martin C."/>
            <person name="Weisshaar B."/>
            <person name="Bailey P.C."/>
        </authorList>
    </citation>
    <scope>GENE FAMILY</scope>
    <scope>NOMENCLATURE</scope>
</reference>
<reference key="5">
    <citation type="journal article" date="2003" name="Plant Cell">
        <title>The Arabidopsis basic/helix-loop-helix transcription factor family.</title>
        <authorList>
            <person name="Toledo-Ortiz G."/>
            <person name="Huq E."/>
            <person name="Quail P.H."/>
        </authorList>
    </citation>
    <scope>GENE FAMILY</scope>
</reference>
<reference key="6">
    <citation type="journal article" date="2003" name="Plant Cell">
        <title>Update on the basic helix-loop-helix transcription factor gene family in Arabidopsis thaliana.</title>
        <authorList>
            <person name="Bailey P.C."/>
            <person name="Martin C."/>
            <person name="Toledo-Ortiz G."/>
            <person name="Quail P.H."/>
            <person name="Huq E."/>
            <person name="Heim M.A."/>
            <person name="Jakoby M."/>
            <person name="Werber M."/>
            <person name="Weisshaar B."/>
        </authorList>
    </citation>
    <scope>GENE FAMILY</scope>
    <scope>NOMENCLATURE</scope>
</reference>
<reference key="7">
    <citation type="journal article" date="2006" name="Proc. Natl. Acad. Sci. U.S.A.">
        <title>Transcriptional and posttranscriptional regulation of transcription factor expression in Arabidopsis roots.</title>
        <authorList>
            <person name="Lee J.-Y."/>
            <person name="Colinas J."/>
            <person name="Wang J.Y."/>
            <person name="Mace D."/>
            <person name="Ohler U."/>
            <person name="Benfey P.N."/>
        </authorList>
    </citation>
    <scope>TISSUE SPECIFICITY</scope>
    <scope>SUBCELLULAR LOCATION</scope>
</reference>